<keyword id="KW-0479">Metal-binding</keyword>
<keyword id="KW-0862">Zinc</keyword>
<dbReference type="EMBL" id="CP001298">
    <property type="protein sequence ID" value="ACK83690.1"/>
    <property type="molecule type" value="Genomic_DNA"/>
</dbReference>
<dbReference type="RefSeq" id="WP_015951131.1">
    <property type="nucleotide sequence ID" value="NC_011757.1"/>
</dbReference>
<dbReference type="SMR" id="B7KPV4"/>
<dbReference type="KEGG" id="mch:Mchl_2851"/>
<dbReference type="HOGENOM" id="CLU_178280_2_0_5"/>
<dbReference type="Proteomes" id="UP000002385">
    <property type="component" value="Chromosome"/>
</dbReference>
<dbReference type="GO" id="GO:0008657">
    <property type="term" value="F:DNA topoisomerase type II (double strand cut, ATP-hydrolyzing) inhibitor activity"/>
    <property type="evidence" value="ECO:0007669"/>
    <property type="project" value="UniProtKB-UniRule"/>
</dbReference>
<dbReference type="GO" id="GO:0008270">
    <property type="term" value="F:zinc ion binding"/>
    <property type="evidence" value="ECO:0007669"/>
    <property type="project" value="UniProtKB-UniRule"/>
</dbReference>
<dbReference type="GO" id="GO:0006355">
    <property type="term" value="P:regulation of DNA-templated transcription"/>
    <property type="evidence" value="ECO:0007669"/>
    <property type="project" value="InterPro"/>
</dbReference>
<dbReference type="Gene3D" id="3.30.50.10">
    <property type="entry name" value="Erythroid Transcription Factor GATA-1, subunit A"/>
    <property type="match status" value="1"/>
</dbReference>
<dbReference type="HAMAP" id="MF_00649">
    <property type="entry name" value="DNA_gyrase_inhibitor_YacG"/>
    <property type="match status" value="1"/>
</dbReference>
<dbReference type="InterPro" id="IPR005584">
    <property type="entry name" value="DNA_gyrase_inhibitor_YacG"/>
</dbReference>
<dbReference type="InterPro" id="IPR013088">
    <property type="entry name" value="Znf_NHR/GATA"/>
</dbReference>
<dbReference type="PANTHER" id="PTHR36150">
    <property type="entry name" value="DNA GYRASE INHIBITOR YACG"/>
    <property type="match status" value="1"/>
</dbReference>
<dbReference type="PANTHER" id="PTHR36150:SF1">
    <property type="entry name" value="DNA GYRASE INHIBITOR YACG"/>
    <property type="match status" value="1"/>
</dbReference>
<dbReference type="Pfam" id="PF03884">
    <property type="entry name" value="YacG"/>
    <property type="match status" value="1"/>
</dbReference>
<dbReference type="SUPFAM" id="SSF57716">
    <property type="entry name" value="Glucocorticoid receptor-like (DNA-binding domain)"/>
    <property type="match status" value="1"/>
</dbReference>
<feature type="chain" id="PRO_1000200407" description="DNA gyrase inhibitor YacG">
    <location>
        <begin position="1"/>
        <end position="72"/>
    </location>
</feature>
<feature type="region of interest" description="Disordered" evidence="2">
    <location>
        <begin position="52"/>
        <end position="72"/>
    </location>
</feature>
<feature type="binding site" evidence="1">
    <location>
        <position position="17"/>
    </location>
    <ligand>
        <name>Zn(2+)</name>
        <dbReference type="ChEBI" id="CHEBI:29105"/>
    </ligand>
</feature>
<feature type="binding site" evidence="1">
    <location>
        <position position="20"/>
    </location>
    <ligand>
        <name>Zn(2+)</name>
        <dbReference type="ChEBI" id="CHEBI:29105"/>
    </ligand>
</feature>
<feature type="binding site" evidence="1">
    <location>
        <position position="32"/>
    </location>
    <ligand>
        <name>Zn(2+)</name>
        <dbReference type="ChEBI" id="CHEBI:29105"/>
    </ligand>
</feature>
<feature type="binding site" evidence="1">
    <location>
        <position position="36"/>
    </location>
    <ligand>
        <name>Zn(2+)</name>
        <dbReference type="ChEBI" id="CHEBI:29105"/>
    </ligand>
</feature>
<gene>
    <name evidence="1" type="primary">yacG</name>
    <name type="ordered locus">Mchl_2851</name>
</gene>
<comment type="function">
    <text evidence="1">Inhibits all the catalytic activities of DNA gyrase by preventing its interaction with DNA. Acts by binding directly to the C-terminal domain of GyrB, which probably disrupts DNA binding by the gyrase.</text>
</comment>
<comment type="cofactor">
    <cofactor evidence="1">
        <name>Zn(2+)</name>
        <dbReference type="ChEBI" id="CHEBI:29105"/>
    </cofactor>
    <text evidence="1">Binds 1 zinc ion.</text>
</comment>
<comment type="subunit">
    <text evidence="1">Interacts with GyrB.</text>
</comment>
<comment type="similarity">
    <text evidence="1">Belongs to the DNA gyrase inhibitor YacG family.</text>
</comment>
<reference key="1">
    <citation type="submission" date="2008-12" db="EMBL/GenBank/DDBJ databases">
        <title>Complete sequence of chromosome of Methylobacterium chloromethanicum CM4.</title>
        <authorList>
            <consortium name="US DOE Joint Genome Institute"/>
            <person name="Lucas S."/>
            <person name="Copeland A."/>
            <person name="Lapidus A."/>
            <person name="Glavina del Rio T."/>
            <person name="Dalin E."/>
            <person name="Tice H."/>
            <person name="Bruce D."/>
            <person name="Goodwin L."/>
            <person name="Pitluck S."/>
            <person name="Chertkov O."/>
            <person name="Brettin T."/>
            <person name="Detter J.C."/>
            <person name="Han C."/>
            <person name="Larimer F."/>
            <person name="Land M."/>
            <person name="Hauser L."/>
            <person name="Kyrpides N."/>
            <person name="Mikhailova N."/>
            <person name="Marx C."/>
            <person name="Richardson P."/>
        </authorList>
    </citation>
    <scope>NUCLEOTIDE SEQUENCE [LARGE SCALE GENOMIC DNA]</scope>
    <source>
        <strain>CM4 / NCIMB 13688</strain>
    </source>
</reference>
<proteinExistence type="inferred from homology"/>
<name>YACG_METC4</name>
<protein>
    <recommendedName>
        <fullName evidence="1">DNA gyrase inhibitor YacG</fullName>
    </recommendedName>
</protein>
<organism>
    <name type="scientific">Methylorubrum extorquens (strain CM4 / NCIMB 13688)</name>
    <name type="common">Methylobacterium extorquens</name>
    <dbReference type="NCBI Taxonomy" id="440085"/>
    <lineage>
        <taxon>Bacteria</taxon>
        <taxon>Pseudomonadati</taxon>
        <taxon>Pseudomonadota</taxon>
        <taxon>Alphaproteobacteria</taxon>
        <taxon>Hyphomicrobiales</taxon>
        <taxon>Methylobacteriaceae</taxon>
        <taxon>Methylorubrum</taxon>
    </lineage>
</organism>
<sequence>MSQSVKRTAADKPLAPCPICGKPARTETKPFCSPRCADIDLGRWLGERYVIPGPEEDEMSYPPHSNDGNRSR</sequence>
<accession>B7KPV4</accession>
<evidence type="ECO:0000255" key="1">
    <source>
        <dbReference type="HAMAP-Rule" id="MF_00649"/>
    </source>
</evidence>
<evidence type="ECO:0000256" key="2">
    <source>
        <dbReference type="SAM" id="MobiDB-lite"/>
    </source>
</evidence>